<comment type="function">
    <text evidence="1">The beta subunit is responsible for the synthesis of L-tryptophan from indole and L-serine.</text>
</comment>
<comment type="catalytic activity">
    <reaction evidence="1">
        <text>(1S,2R)-1-C-(indol-3-yl)glycerol 3-phosphate + L-serine = D-glyceraldehyde 3-phosphate + L-tryptophan + H2O</text>
        <dbReference type="Rhea" id="RHEA:10532"/>
        <dbReference type="ChEBI" id="CHEBI:15377"/>
        <dbReference type="ChEBI" id="CHEBI:33384"/>
        <dbReference type="ChEBI" id="CHEBI:57912"/>
        <dbReference type="ChEBI" id="CHEBI:58866"/>
        <dbReference type="ChEBI" id="CHEBI:59776"/>
        <dbReference type="EC" id="4.2.1.20"/>
    </reaction>
</comment>
<comment type="cofactor">
    <cofactor evidence="1">
        <name>pyridoxal 5'-phosphate</name>
        <dbReference type="ChEBI" id="CHEBI:597326"/>
    </cofactor>
</comment>
<comment type="pathway">
    <text evidence="1">Amino-acid biosynthesis; L-tryptophan biosynthesis; L-tryptophan from chorismate: step 5/5.</text>
</comment>
<comment type="subunit">
    <text evidence="1">Tetramer of two alpha and two beta chains.</text>
</comment>
<comment type="similarity">
    <text evidence="1">Belongs to the TrpB family.</text>
</comment>
<protein>
    <recommendedName>
        <fullName evidence="1">Tryptophan synthase beta chain</fullName>
        <ecNumber evidence="1">4.2.1.20</ecNumber>
    </recommendedName>
</protein>
<dbReference type="EC" id="4.2.1.20" evidence="1"/>
<dbReference type="EMBL" id="CP000472">
    <property type="protein sequence ID" value="ACJ28677.1"/>
    <property type="molecule type" value="Genomic_DNA"/>
</dbReference>
<dbReference type="RefSeq" id="WP_020912052.1">
    <property type="nucleotide sequence ID" value="NC_011566.1"/>
</dbReference>
<dbReference type="SMR" id="B8CLM6"/>
<dbReference type="STRING" id="225849.swp_1919"/>
<dbReference type="KEGG" id="swp:swp_1919"/>
<dbReference type="eggNOG" id="COG0133">
    <property type="taxonomic scope" value="Bacteria"/>
</dbReference>
<dbReference type="HOGENOM" id="CLU_016734_3_1_6"/>
<dbReference type="OrthoDB" id="9766131at2"/>
<dbReference type="UniPathway" id="UPA00035">
    <property type="reaction ID" value="UER00044"/>
</dbReference>
<dbReference type="Proteomes" id="UP000000753">
    <property type="component" value="Chromosome"/>
</dbReference>
<dbReference type="GO" id="GO:0005737">
    <property type="term" value="C:cytoplasm"/>
    <property type="evidence" value="ECO:0007669"/>
    <property type="project" value="TreeGrafter"/>
</dbReference>
<dbReference type="GO" id="GO:0004834">
    <property type="term" value="F:tryptophan synthase activity"/>
    <property type="evidence" value="ECO:0007669"/>
    <property type="project" value="UniProtKB-UniRule"/>
</dbReference>
<dbReference type="CDD" id="cd06446">
    <property type="entry name" value="Trp-synth_B"/>
    <property type="match status" value="1"/>
</dbReference>
<dbReference type="FunFam" id="3.40.50.1100:FF:000001">
    <property type="entry name" value="Tryptophan synthase beta chain"/>
    <property type="match status" value="1"/>
</dbReference>
<dbReference type="FunFam" id="3.40.50.1100:FF:000004">
    <property type="entry name" value="Tryptophan synthase beta chain"/>
    <property type="match status" value="1"/>
</dbReference>
<dbReference type="Gene3D" id="3.40.50.1100">
    <property type="match status" value="2"/>
</dbReference>
<dbReference type="HAMAP" id="MF_00133">
    <property type="entry name" value="Trp_synth_beta"/>
    <property type="match status" value="1"/>
</dbReference>
<dbReference type="InterPro" id="IPR006653">
    <property type="entry name" value="Trp_synth_b_CS"/>
</dbReference>
<dbReference type="InterPro" id="IPR006654">
    <property type="entry name" value="Trp_synth_beta"/>
</dbReference>
<dbReference type="InterPro" id="IPR023026">
    <property type="entry name" value="Trp_synth_beta/beta-like"/>
</dbReference>
<dbReference type="InterPro" id="IPR001926">
    <property type="entry name" value="TrpB-like_PALP"/>
</dbReference>
<dbReference type="InterPro" id="IPR036052">
    <property type="entry name" value="TrpB-like_PALP_sf"/>
</dbReference>
<dbReference type="NCBIfam" id="TIGR00263">
    <property type="entry name" value="trpB"/>
    <property type="match status" value="1"/>
</dbReference>
<dbReference type="PANTHER" id="PTHR48077:SF3">
    <property type="entry name" value="TRYPTOPHAN SYNTHASE"/>
    <property type="match status" value="1"/>
</dbReference>
<dbReference type="PANTHER" id="PTHR48077">
    <property type="entry name" value="TRYPTOPHAN SYNTHASE-RELATED"/>
    <property type="match status" value="1"/>
</dbReference>
<dbReference type="Pfam" id="PF00291">
    <property type="entry name" value="PALP"/>
    <property type="match status" value="1"/>
</dbReference>
<dbReference type="PIRSF" id="PIRSF001413">
    <property type="entry name" value="Trp_syn_beta"/>
    <property type="match status" value="1"/>
</dbReference>
<dbReference type="SUPFAM" id="SSF53686">
    <property type="entry name" value="Tryptophan synthase beta subunit-like PLP-dependent enzymes"/>
    <property type="match status" value="1"/>
</dbReference>
<dbReference type="PROSITE" id="PS00168">
    <property type="entry name" value="TRP_SYNTHASE_BETA"/>
    <property type="match status" value="1"/>
</dbReference>
<organism>
    <name type="scientific">Shewanella piezotolerans (strain WP3 / JCM 13877)</name>
    <dbReference type="NCBI Taxonomy" id="225849"/>
    <lineage>
        <taxon>Bacteria</taxon>
        <taxon>Pseudomonadati</taxon>
        <taxon>Pseudomonadota</taxon>
        <taxon>Gammaproteobacteria</taxon>
        <taxon>Alteromonadales</taxon>
        <taxon>Shewanellaceae</taxon>
        <taxon>Shewanella</taxon>
    </lineage>
</organism>
<name>TRPB_SHEPW</name>
<feature type="chain" id="PRO_1000117762" description="Tryptophan synthase beta chain">
    <location>
        <begin position="1"/>
        <end position="405"/>
    </location>
</feature>
<feature type="modified residue" description="N6-(pyridoxal phosphate)lysine" evidence="1">
    <location>
        <position position="86"/>
    </location>
</feature>
<accession>B8CLM6</accession>
<keyword id="KW-0028">Amino-acid biosynthesis</keyword>
<keyword id="KW-0057">Aromatic amino acid biosynthesis</keyword>
<keyword id="KW-0456">Lyase</keyword>
<keyword id="KW-0663">Pyridoxal phosphate</keyword>
<keyword id="KW-0822">Tryptophan biosynthesis</keyword>
<gene>
    <name evidence="1" type="primary">trpB</name>
    <name type="ordered locus">swp_1919</name>
</gene>
<reference key="1">
    <citation type="journal article" date="2008" name="PLoS ONE">
        <title>Environmental adaptation: genomic analysis of the piezotolerant and psychrotolerant deep-sea iron reducing bacterium Shewanella piezotolerans WP3.</title>
        <authorList>
            <person name="Wang F."/>
            <person name="Wang J."/>
            <person name="Jian H."/>
            <person name="Zhang B."/>
            <person name="Li S."/>
            <person name="Wang F."/>
            <person name="Zeng X."/>
            <person name="Gao L."/>
            <person name="Bartlett D.H."/>
            <person name="Yu J."/>
            <person name="Hu S."/>
            <person name="Xiao X."/>
        </authorList>
    </citation>
    <scope>NUCLEOTIDE SEQUENCE [LARGE SCALE GENOMIC DNA]</scope>
    <source>
        <strain>WP3 / JCM 13877</strain>
    </source>
</reference>
<sequence>MSKLNPYFGEYGGMYVPQILMPALKQLETAFIEAQQDEAFQKEFTDLLKNYAGRPTALTLTRNLSPNPLAKIYLKREDLLHGGAHKTNQVLGQALLAKRMGKKEIIAETGAGQHGVATALACALLDLKCKVYMGAKDVERQSPNVFRMKLMGAEVIPVTSGSATLKDACNEAMRDWSASYDKAHYLLGTAAGPHPFPTIVREFQRMIGAETKQQILEREGRLPDAVIACVGGGSNAIGMFADFIDEEEVALIGVEPAGKGIDTPMHGAPLKHGKTGIFFGMKAPLMQDSEGQIEESYSVSAGLDFPSVGPQHAHLAATGRATYESATDDEALETFQLLARSEGIIPALESAHALAYAVKLAKAATKETLLVVNLSGRGDKDIFTVADILEKQQADSSTTEESGNE</sequence>
<evidence type="ECO:0000255" key="1">
    <source>
        <dbReference type="HAMAP-Rule" id="MF_00133"/>
    </source>
</evidence>
<proteinExistence type="inferred from homology"/>